<keyword id="KW-1185">Reference proteome</keyword>
<keyword id="KW-0687">Ribonucleoprotein</keyword>
<keyword id="KW-0689">Ribosomal protein</keyword>
<keyword id="KW-0694">RNA-binding</keyword>
<keyword id="KW-0699">rRNA-binding</keyword>
<reference key="1">
    <citation type="journal article" date="2006" name="Nat. Biotechnol.">
        <title>Genome sequence of the ubiquitous hydrocarbon-degrading marine bacterium Alcanivorax borkumensis.</title>
        <authorList>
            <person name="Schneiker S."/>
            <person name="Martins dos Santos V.A.P."/>
            <person name="Bartels D."/>
            <person name="Bekel T."/>
            <person name="Brecht M."/>
            <person name="Buhrmester J."/>
            <person name="Chernikova T.N."/>
            <person name="Denaro R."/>
            <person name="Ferrer M."/>
            <person name="Gertler C."/>
            <person name="Goesmann A."/>
            <person name="Golyshina O.V."/>
            <person name="Kaminski F."/>
            <person name="Khachane A.N."/>
            <person name="Lang S."/>
            <person name="Linke B."/>
            <person name="McHardy A.C."/>
            <person name="Meyer F."/>
            <person name="Nechitaylo T."/>
            <person name="Puehler A."/>
            <person name="Regenhardt D."/>
            <person name="Rupp O."/>
            <person name="Sabirova J.S."/>
            <person name="Selbitschka W."/>
            <person name="Yakimov M.M."/>
            <person name="Timmis K.N."/>
            <person name="Vorhoelter F.-J."/>
            <person name="Weidner S."/>
            <person name="Kaiser O."/>
            <person name="Golyshin P.N."/>
        </authorList>
    </citation>
    <scope>NUCLEOTIDE SEQUENCE [LARGE SCALE GENOMIC DNA]</scope>
    <source>
        <strain>ATCC 700651 / DSM 11573 / NCIMB 13689 / SK2</strain>
    </source>
</reference>
<dbReference type="EMBL" id="AM286690">
    <property type="protein sequence ID" value="CAL15868.1"/>
    <property type="molecule type" value="Genomic_DNA"/>
</dbReference>
<dbReference type="RefSeq" id="WP_011587706.1">
    <property type="nucleotide sequence ID" value="NC_008260.1"/>
</dbReference>
<dbReference type="SMR" id="Q0VSI0"/>
<dbReference type="STRING" id="393595.ABO_0420"/>
<dbReference type="KEGG" id="abo:ABO_0420"/>
<dbReference type="eggNOG" id="COG0100">
    <property type="taxonomic scope" value="Bacteria"/>
</dbReference>
<dbReference type="HOGENOM" id="CLU_072439_5_0_6"/>
<dbReference type="OrthoDB" id="9806415at2"/>
<dbReference type="Proteomes" id="UP000008871">
    <property type="component" value="Chromosome"/>
</dbReference>
<dbReference type="GO" id="GO:1990904">
    <property type="term" value="C:ribonucleoprotein complex"/>
    <property type="evidence" value="ECO:0007669"/>
    <property type="project" value="UniProtKB-KW"/>
</dbReference>
<dbReference type="GO" id="GO:0005840">
    <property type="term" value="C:ribosome"/>
    <property type="evidence" value="ECO:0007669"/>
    <property type="project" value="UniProtKB-KW"/>
</dbReference>
<dbReference type="GO" id="GO:0019843">
    <property type="term" value="F:rRNA binding"/>
    <property type="evidence" value="ECO:0007669"/>
    <property type="project" value="UniProtKB-UniRule"/>
</dbReference>
<dbReference type="GO" id="GO:0003735">
    <property type="term" value="F:structural constituent of ribosome"/>
    <property type="evidence" value="ECO:0007669"/>
    <property type="project" value="InterPro"/>
</dbReference>
<dbReference type="GO" id="GO:0006412">
    <property type="term" value="P:translation"/>
    <property type="evidence" value="ECO:0007669"/>
    <property type="project" value="UniProtKB-UniRule"/>
</dbReference>
<dbReference type="FunFam" id="3.30.420.80:FF:000001">
    <property type="entry name" value="30S ribosomal protein S11"/>
    <property type="match status" value="1"/>
</dbReference>
<dbReference type="Gene3D" id="3.30.420.80">
    <property type="entry name" value="Ribosomal protein S11"/>
    <property type="match status" value="1"/>
</dbReference>
<dbReference type="HAMAP" id="MF_01310">
    <property type="entry name" value="Ribosomal_uS11"/>
    <property type="match status" value="1"/>
</dbReference>
<dbReference type="InterPro" id="IPR001971">
    <property type="entry name" value="Ribosomal_uS11"/>
</dbReference>
<dbReference type="InterPro" id="IPR019981">
    <property type="entry name" value="Ribosomal_uS11_bac-type"/>
</dbReference>
<dbReference type="InterPro" id="IPR018102">
    <property type="entry name" value="Ribosomal_uS11_CS"/>
</dbReference>
<dbReference type="InterPro" id="IPR036967">
    <property type="entry name" value="Ribosomal_uS11_sf"/>
</dbReference>
<dbReference type="NCBIfam" id="NF003698">
    <property type="entry name" value="PRK05309.1"/>
    <property type="match status" value="1"/>
</dbReference>
<dbReference type="NCBIfam" id="TIGR03632">
    <property type="entry name" value="uS11_bact"/>
    <property type="match status" value="1"/>
</dbReference>
<dbReference type="PANTHER" id="PTHR11759">
    <property type="entry name" value="40S RIBOSOMAL PROTEIN S14/30S RIBOSOMAL PROTEIN S11"/>
    <property type="match status" value="1"/>
</dbReference>
<dbReference type="Pfam" id="PF00411">
    <property type="entry name" value="Ribosomal_S11"/>
    <property type="match status" value="1"/>
</dbReference>
<dbReference type="PIRSF" id="PIRSF002131">
    <property type="entry name" value="Ribosomal_S11"/>
    <property type="match status" value="1"/>
</dbReference>
<dbReference type="SUPFAM" id="SSF53137">
    <property type="entry name" value="Translational machinery components"/>
    <property type="match status" value="1"/>
</dbReference>
<dbReference type="PROSITE" id="PS00054">
    <property type="entry name" value="RIBOSOMAL_S11"/>
    <property type="match status" value="1"/>
</dbReference>
<proteinExistence type="inferred from homology"/>
<accession>Q0VSI0</accession>
<organism>
    <name type="scientific">Alcanivorax borkumensis (strain ATCC 700651 / DSM 11573 / NCIMB 13689 / SK2)</name>
    <dbReference type="NCBI Taxonomy" id="393595"/>
    <lineage>
        <taxon>Bacteria</taxon>
        <taxon>Pseudomonadati</taxon>
        <taxon>Pseudomonadota</taxon>
        <taxon>Gammaproteobacteria</taxon>
        <taxon>Oceanospirillales</taxon>
        <taxon>Alcanivoracaceae</taxon>
        <taxon>Alcanivorax</taxon>
    </lineage>
</organism>
<sequence>MAKSKKDSGARRKKVTRTVADGIAHVHASFNNTIITITDRQGNALSWATSGGAGFRGSRKSTPFAAQVAAENAGNAAKDYGLKNLEVRVKGPGPGRESSIRALNGCGYKITHIEDVTPIPHNGCRPPKKRRV</sequence>
<protein>
    <recommendedName>
        <fullName evidence="1">Small ribosomal subunit protein uS11</fullName>
    </recommendedName>
    <alternativeName>
        <fullName evidence="2">30S ribosomal protein S11</fullName>
    </alternativeName>
</protein>
<name>RS11_ALCBS</name>
<comment type="function">
    <text evidence="1">Located on the platform of the 30S subunit, it bridges several disparate RNA helices of the 16S rRNA. Forms part of the Shine-Dalgarno cleft in the 70S ribosome.</text>
</comment>
<comment type="subunit">
    <text evidence="1">Part of the 30S ribosomal subunit. Interacts with proteins S7 and S18. Binds to IF-3.</text>
</comment>
<comment type="similarity">
    <text evidence="1">Belongs to the universal ribosomal protein uS11 family.</text>
</comment>
<evidence type="ECO:0000255" key="1">
    <source>
        <dbReference type="HAMAP-Rule" id="MF_01310"/>
    </source>
</evidence>
<evidence type="ECO:0000305" key="2"/>
<gene>
    <name evidence="1" type="primary">rpsK</name>
    <name type="ordered locus">ABO_0420</name>
</gene>
<feature type="chain" id="PRO_0000294709" description="Small ribosomal subunit protein uS11">
    <location>
        <begin position="1"/>
        <end position="132"/>
    </location>
</feature>